<sequence>MYQDSFYILNSAFSLSEIEVGAHLYWEVAGLKLHGQVFIVSWLVIAALIGFALVGTKDLKQAPQGIQNFMEYVYEFLQDIAKNQIGEEEYRPWVPYIATVFLFIFGANWAGALIPWKLIQLPEGELAAPTNDINVTVALALLTSLSYFYAGLSKKGIGYFARYVQPTPILLPINILEDFTKPLSLSFRLFGNVLADELVVSVFALLVPILIPLPVMTLGLFASSVQALIFSTLSAAYIGEALEDHH</sequence>
<organism>
    <name type="scientific">Rhodomonas salina</name>
    <name type="common">Cryptomonas salina</name>
    <dbReference type="NCBI Taxonomy" id="52970"/>
    <lineage>
        <taxon>Eukaryota</taxon>
        <taxon>Cryptophyceae</taxon>
        <taxon>Pyrenomonadales</taxon>
        <taxon>Pyrenomonadaceae</taxon>
        <taxon>Rhodomonas</taxon>
    </lineage>
</organism>
<evidence type="ECO:0000255" key="1">
    <source>
        <dbReference type="HAMAP-Rule" id="MF_01393"/>
    </source>
</evidence>
<keyword id="KW-0066">ATP synthesis</keyword>
<keyword id="KW-0138">CF(0)</keyword>
<keyword id="KW-0150">Chloroplast</keyword>
<keyword id="KW-0375">Hydrogen ion transport</keyword>
<keyword id="KW-0406">Ion transport</keyword>
<keyword id="KW-0472">Membrane</keyword>
<keyword id="KW-0934">Plastid</keyword>
<keyword id="KW-0793">Thylakoid</keyword>
<keyword id="KW-0812">Transmembrane</keyword>
<keyword id="KW-1133">Transmembrane helix</keyword>
<keyword id="KW-0813">Transport</keyword>
<dbReference type="EMBL" id="EF508371">
    <property type="protein sequence ID" value="ABO70816.1"/>
    <property type="molecule type" value="Genomic_DNA"/>
</dbReference>
<dbReference type="RefSeq" id="YP_001293548.1">
    <property type="nucleotide sequence ID" value="NC_009573.1"/>
</dbReference>
<dbReference type="SMR" id="A6MVW9"/>
<dbReference type="GeneID" id="5228628"/>
<dbReference type="GO" id="GO:0009535">
    <property type="term" value="C:chloroplast thylakoid membrane"/>
    <property type="evidence" value="ECO:0007669"/>
    <property type="project" value="UniProtKB-SubCell"/>
</dbReference>
<dbReference type="GO" id="GO:0005886">
    <property type="term" value="C:plasma membrane"/>
    <property type="evidence" value="ECO:0007669"/>
    <property type="project" value="UniProtKB-UniRule"/>
</dbReference>
<dbReference type="GO" id="GO:0045259">
    <property type="term" value="C:proton-transporting ATP synthase complex"/>
    <property type="evidence" value="ECO:0007669"/>
    <property type="project" value="UniProtKB-KW"/>
</dbReference>
<dbReference type="GO" id="GO:0046933">
    <property type="term" value="F:proton-transporting ATP synthase activity, rotational mechanism"/>
    <property type="evidence" value="ECO:0007669"/>
    <property type="project" value="UniProtKB-UniRule"/>
</dbReference>
<dbReference type="CDD" id="cd00310">
    <property type="entry name" value="ATP-synt_Fo_a_6"/>
    <property type="match status" value="1"/>
</dbReference>
<dbReference type="FunFam" id="1.20.120.220:FF:000001">
    <property type="entry name" value="ATP synthase subunit a, chloroplastic"/>
    <property type="match status" value="1"/>
</dbReference>
<dbReference type="Gene3D" id="1.20.120.220">
    <property type="entry name" value="ATP synthase, F0 complex, subunit A"/>
    <property type="match status" value="1"/>
</dbReference>
<dbReference type="HAMAP" id="MF_01393">
    <property type="entry name" value="ATP_synth_a_bact"/>
    <property type="match status" value="1"/>
</dbReference>
<dbReference type="InterPro" id="IPR045082">
    <property type="entry name" value="ATP_syn_F0_a_bact/chloroplast"/>
</dbReference>
<dbReference type="InterPro" id="IPR000568">
    <property type="entry name" value="ATP_synth_F0_asu"/>
</dbReference>
<dbReference type="InterPro" id="IPR023011">
    <property type="entry name" value="ATP_synth_F0_asu_AS"/>
</dbReference>
<dbReference type="InterPro" id="IPR035908">
    <property type="entry name" value="F0_ATP_A_sf"/>
</dbReference>
<dbReference type="NCBIfam" id="TIGR01131">
    <property type="entry name" value="ATP_synt_6_or_A"/>
    <property type="match status" value="1"/>
</dbReference>
<dbReference type="PANTHER" id="PTHR42823">
    <property type="entry name" value="ATP SYNTHASE SUBUNIT A, CHLOROPLASTIC"/>
    <property type="match status" value="1"/>
</dbReference>
<dbReference type="PANTHER" id="PTHR42823:SF3">
    <property type="entry name" value="ATP SYNTHASE SUBUNIT A, CHLOROPLASTIC"/>
    <property type="match status" value="1"/>
</dbReference>
<dbReference type="Pfam" id="PF00119">
    <property type="entry name" value="ATP-synt_A"/>
    <property type="match status" value="1"/>
</dbReference>
<dbReference type="PRINTS" id="PR00123">
    <property type="entry name" value="ATPASEA"/>
</dbReference>
<dbReference type="SUPFAM" id="SSF81336">
    <property type="entry name" value="F1F0 ATP synthase subunit A"/>
    <property type="match status" value="1"/>
</dbReference>
<dbReference type="PROSITE" id="PS00449">
    <property type="entry name" value="ATPASE_A"/>
    <property type="match status" value="1"/>
</dbReference>
<proteinExistence type="inferred from homology"/>
<geneLocation type="chloroplast"/>
<accession>A6MVW9</accession>
<reference key="1">
    <citation type="journal article" date="2007" name="Mol. Biol. Evol.">
        <title>Plastid genome sequence of the cryptophyte alga Rhodomonas salina CCMP1319: lateral transfer of putative DNA replication machinery and a test of chromist plastid phylogeny.</title>
        <authorList>
            <person name="Khan H."/>
            <person name="Parks N."/>
            <person name="Kozera C."/>
            <person name="Curtis B.A."/>
            <person name="Parsons B.J."/>
            <person name="Bowman S."/>
            <person name="Archibald J.M."/>
        </authorList>
    </citation>
    <scope>NUCLEOTIDE SEQUENCE [LARGE SCALE GENOMIC DNA]</scope>
    <source>
        <strain>CCMP1319 / NEPCC76 / CS-174</strain>
    </source>
</reference>
<name>ATPI_RHDSA</name>
<gene>
    <name evidence="1" type="primary">atpI</name>
</gene>
<comment type="function">
    <text evidence="1">Key component of the proton channel; it plays a direct role in the translocation of protons across the membrane.</text>
</comment>
<comment type="subunit">
    <text evidence="1">F-type ATPases have 2 components, CF(1) - the catalytic core - and CF(0) - the membrane proton channel. CF(1) has five subunits: alpha(3), beta(3), gamma(1), delta(1), epsilon(1). CF(0) has four main subunits: a, b, b' and c.</text>
</comment>
<comment type="subcellular location">
    <subcellularLocation>
        <location evidence="1">Plastid</location>
        <location evidence="1">Chloroplast thylakoid membrane</location>
        <topology evidence="1">Multi-pass membrane protein</topology>
    </subcellularLocation>
</comment>
<comment type="similarity">
    <text evidence="1">Belongs to the ATPase A chain family.</text>
</comment>
<feature type="chain" id="PRO_0000362607" description="ATP synthase subunit a, chloroplastic">
    <location>
        <begin position="1"/>
        <end position="246"/>
    </location>
</feature>
<feature type="transmembrane region" description="Helical" evidence="1">
    <location>
        <begin position="35"/>
        <end position="55"/>
    </location>
</feature>
<feature type="transmembrane region" description="Helical" evidence="1">
    <location>
        <begin position="94"/>
        <end position="114"/>
    </location>
</feature>
<feature type="transmembrane region" description="Helical" evidence="1">
    <location>
        <begin position="133"/>
        <end position="153"/>
    </location>
</feature>
<feature type="transmembrane region" description="Helical" evidence="1">
    <location>
        <begin position="202"/>
        <end position="222"/>
    </location>
</feature>
<protein>
    <recommendedName>
        <fullName evidence="1">ATP synthase subunit a, chloroplastic</fullName>
    </recommendedName>
    <alternativeName>
        <fullName evidence="1">ATP synthase F0 sector subunit a</fullName>
    </alternativeName>
    <alternativeName>
        <fullName evidence="1">F-ATPase subunit IV</fullName>
    </alternativeName>
</protein>